<dbReference type="EC" id="7.5.2.3" evidence="2"/>
<dbReference type="EMBL" id="AM236080">
    <property type="protein sequence ID" value="CAK10123.1"/>
    <property type="molecule type" value="Genomic_DNA"/>
</dbReference>
<dbReference type="SMR" id="Q1MAB5"/>
<dbReference type="EnsemblBacteria" id="CAK10123">
    <property type="protein sequence ID" value="CAK10123"/>
    <property type="gene ID" value="RL4640"/>
</dbReference>
<dbReference type="KEGG" id="rle:RL4640"/>
<dbReference type="eggNOG" id="COG1132">
    <property type="taxonomic scope" value="Bacteria"/>
</dbReference>
<dbReference type="HOGENOM" id="CLU_000604_84_8_5"/>
<dbReference type="Proteomes" id="UP000006575">
    <property type="component" value="Chromosome"/>
</dbReference>
<dbReference type="GO" id="GO:0005886">
    <property type="term" value="C:plasma membrane"/>
    <property type="evidence" value="ECO:0007669"/>
    <property type="project" value="UniProtKB-SubCell"/>
</dbReference>
<dbReference type="GO" id="GO:0015441">
    <property type="term" value="F:ABC-type beta-glucan transporter activity"/>
    <property type="evidence" value="ECO:0007669"/>
    <property type="project" value="UniProtKB-EC"/>
</dbReference>
<dbReference type="GO" id="GO:0015421">
    <property type="term" value="F:ABC-type oligopeptide transporter activity"/>
    <property type="evidence" value="ECO:0007669"/>
    <property type="project" value="TreeGrafter"/>
</dbReference>
<dbReference type="GO" id="GO:0005524">
    <property type="term" value="F:ATP binding"/>
    <property type="evidence" value="ECO:0007669"/>
    <property type="project" value="UniProtKB-KW"/>
</dbReference>
<dbReference type="GO" id="GO:0016887">
    <property type="term" value="F:ATP hydrolysis activity"/>
    <property type="evidence" value="ECO:0007669"/>
    <property type="project" value="InterPro"/>
</dbReference>
<dbReference type="CDD" id="cd18562">
    <property type="entry name" value="ABC_6TM_NdvA_beta-glucan_exporter_like"/>
    <property type="match status" value="1"/>
</dbReference>
<dbReference type="CDD" id="cd03254">
    <property type="entry name" value="ABCC_Glucan_exporter_like"/>
    <property type="match status" value="1"/>
</dbReference>
<dbReference type="FunFam" id="3.40.50.300:FF:000221">
    <property type="entry name" value="Multidrug ABC transporter ATP-binding protein"/>
    <property type="match status" value="1"/>
</dbReference>
<dbReference type="Gene3D" id="1.20.1560.10">
    <property type="entry name" value="ABC transporter type 1, transmembrane domain"/>
    <property type="match status" value="1"/>
</dbReference>
<dbReference type="Gene3D" id="3.40.50.300">
    <property type="entry name" value="P-loop containing nucleotide triphosphate hydrolases"/>
    <property type="match status" value="1"/>
</dbReference>
<dbReference type="InterPro" id="IPR003593">
    <property type="entry name" value="AAA+_ATPase"/>
</dbReference>
<dbReference type="InterPro" id="IPR011527">
    <property type="entry name" value="ABC1_TM_dom"/>
</dbReference>
<dbReference type="InterPro" id="IPR036640">
    <property type="entry name" value="ABC1_TM_sf"/>
</dbReference>
<dbReference type="InterPro" id="IPR003439">
    <property type="entry name" value="ABC_transporter-like_ATP-bd"/>
</dbReference>
<dbReference type="InterPro" id="IPR017871">
    <property type="entry name" value="ABC_transporter-like_CS"/>
</dbReference>
<dbReference type="InterPro" id="IPR005896">
    <property type="entry name" value="NdvA"/>
</dbReference>
<dbReference type="InterPro" id="IPR027417">
    <property type="entry name" value="P-loop_NTPase"/>
</dbReference>
<dbReference type="InterPro" id="IPR039421">
    <property type="entry name" value="Type_1_exporter"/>
</dbReference>
<dbReference type="NCBIfam" id="TIGR01192">
    <property type="entry name" value="chvA"/>
    <property type="match status" value="1"/>
</dbReference>
<dbReference type="NCBIfam" id="NF010178">
    <property type="entry name" value="PRK13657.1"/>
    <property type="match status" value="1"/>
</dbReference>
<dbReference type="PANTHER" id="PTHR43394:SF1">
    <property type="entry name" value="ATP-BINDING CASSETTE SUB-FAMILY B MEMBER 10, MITOCHONDRIAL"/>
    <property type="match status" value="1"/>
</dbReference>
<dbReference type="PANTHER" id="PTHR43394">
    <property type="entry name" value="ATP-DEPENDENT PERMEASE MDL1, MITOCHONDRIAL"/>
    <property type="match status" value="1"/>
</dbReference>
<dbReference type="Pfam" id="PF00664">
    <property type="entry name" value="ABC_membrane"/>
    <property type="match status" value="1"/>
</dbReference>
<dbReference type="Pfam" id="PF00005">
    <property type="entry name" value="ABC_tran"/>
    <property type="match status" value="1"/>
</dbReference>
<dbReference type="SMART" id="SM00382">
    <property type="entry name" value="AAA"/>
    <property type="match status" value="1"/>
</dbReference>
<dbReference type="SUPFAM" id="SSF90123">
    <property type="entry name" value="ABC transporter transmembrane region"/>
    <property type="match status" value="1"/>
</dbReference>
<dbReference type="SUPFAM" id="SSF52540">
    <property type="entry name" value="P-loop containing nucleoside triphosphate hydrolases"/>
    <property type="match status" value="1"/>
</dbReference>
<dbReference type="PROSITE" id="PS50929">
    <property type="entry name" value="ABC_TM1F"/>
    <property type="match status" value="1"/>
</dbReference>
<dbReference type="PROSITE" id="PS00211">
    <property type="entry name" value="ABC_TRANSPORTER_1"/>
    <property type="match status" value="1"/>
</dbReference>
<dbReference type="PROSITE" id="PS50893">
    <property type="entry name" value="ABC_TRANSPORTER_2"/>
    <property type="match status" value="1"/>
</dbReference>
<dbReference type="PROSITE" id="PS51317">
    <property type="entry name" value="NDVA"/>
    <property type="match status" value="1"/>
</dbReference>
<comment type="function">
    <text evidence="1">Involved in beta-(1--&gt;2)glucan export. Transmembrane domains (TMD) form a pore in the inner membrane and the ATP-binding domain (NBD) is responsible for energy generation (By similarity).</text>
</comment>
<comment type="catalytic activity">
    <reaction evidence="2">
        <text>[(1-&gt;2)-beta-D-glucosyl](n)(in) + ATP + H2O = [(1-&gt;2)-beta-D-glucosyl](n)(out) + ADP + phosphate + H(+)</text>
        <dbReference type="Rhea" id="RHEA:18453"/>
        <dbReference type="Rhea" id="RHEA-COMP:11881"/>
        <dbReference type="ChEBI" id="CHEBI:15377"/>
        <dbReference type="ChEBI" id="CHEBI:15378"/>
        <dbReference type="ChEBI" id="CHEBI:27517"/>
        <dbReference type="ChEBI" id="CHEBI:30616"/>
        <dbReference type="ChEBI" id="CHEBI:43474"/>
        <dbReference type="ChEBI" id="CHEBI:456216"/>
        <dbReference type="EC" id="7.5.2.3"/>
    </reaction>
</comment>
<comment type="subunit">
    <text evidence="2">Homodimer.</text>
</comment>
<comment type="subcellular location">
    <subcellularLocation>
        <location evidence="2">Cell inner membrane</location>
        <topology evidence="2">Multi-pass membrane protein</topology>
    </subcellularLocation>
</comment>
<comment type="domain">
    <text>In NdvA the ATP-binding domain (NBD) and the transmembrane domain (TMD) are fused.</text>
</comment>
<comment type="similarity">
    <text evidence="2">Belongs to the ABC transporter superfamily. Beta-(1--&gt;2)glucan exporter (TC 3.A.1.108.1) family.</text>
</comment>
<gene>
    <name evidence="2" type="primary">ndvA</name>
    <name type="ordered locus">RL4640</name>
</gene>
<reference key="1">
    <citation type="journal article" date="2006" name="Genome Biol.">
        <title>The genome of Rhizobium leguminosarum has recognizable core and accessory components.</title>
        <authorList>
            <person name="Young J.P.W."/>
            <person name="Crossman L.C."/>
            <person name="Johnston A.W.B."/>
            <person name="Thomson N.R."/>
            <person name="Ghazoui Z.F."/>
            <person name="Hull K.H."/>
            <person name="Wexler M."/>
            <person name="Curson A.R.J."/>
            <person name="Todd J.D."/>
            <person name="Poole P.S."/>
            <person name="Mauchline T.H."/>
            <person name="East A.K."/>
            <person name="Quail M.A."/>
            <person name="Churcher C."/>
            <person name="Arrowsmith C."/>
            <person name="Cherevach I."/>
            <person name="Chillingworth T."/>
            <person name="Clarke K."/>
            <person name="Cronin A."/>
            <person name="Davis P."/>
            <person name="Fraser A."/>
            <person name="Hance Z."/>
            <person name="Hauser H."/>
            <person name="Jagels K."/>
            <person name="Moule S."/>
            <person name="Mungall K."/>
            <person name="Norbertczak H."/>
            <person name="Rabbinowitsch E."/>
            <person name="Sanders M."/>
            <person name="Simmonds M."/>
            <person name="Whitehead S."/>
            <person name="Parkhill J."/>
        </authorList>
    </citation>
    <scope>NUCLEOTIDE SEQUENCE [LARGE SCALE GENOMIC DNA]</scope>
    <source>
        <strain>DSM 114642 / LMG 32736 / 3841</strain>
    </source>
</reference>
<keyword id="KW-0067">ATP-binding</keyword>
<keyword id="KW-0997">Cell inner membrane</keyword>
<keyword id="KW-1003">Cell membrane</keyword>
<keyword id="KW-0472">Membrane</keyword>
<keyword id="KW-0547">Nucleotide-binding</keyword>
<keyword id="KW-0762">Sugar transport</keyword>
<keyword id="KW-1278">Translocase</keyword>
<keyword id="KW-0812">Transmembrane</keyword>
<keyword id="KW-1133">Transmembrane helix</keyword>
<keyword id="KW-0813">Transport</keyword>
<accession>Q1MAB5</accession>
<feature type="chain" id="PRO_0000290251" description="Beta-(1--&gt;2)glucan export ATP-binding/permease protein NdvA">
    <location>
        <begin position="1"/>
        <end position="587"/>
    </location>
</feature>
<feature type="transmembrane region" description="Helical" evidence="2">
    <location>
        <begin position="23"/>
        <end position="43"/>
    </location>
</feature>
<feature type="transmembrane region" description="Helical" evidence="2">
    <location>
        <begin position="57"/>
        <end position="77"/>
    </location>
</feature>
<feature type="transmembrane region" description="Helical" evidence="2">
    <location>
        <begin position="128"/>
        <end position="148"/>
    </location>
</feature>
<feature type="transmembrane region" description="Helical" evidence="2">
    <location>
        <begin position="158"/>
        <end position="178"/>
    </location>
</feature>
<feature type="transmembrane region" description="Helical" evidence="2">
    <location>
        <begin position="248"/>
        <end position="268"/>
    </location>
</feature>
<feature type="transmembrane region" description="Helical" evidence="2">
    <location>
        <begin position="272"/>
        <end position="292"/>
    </location>
</feature>
<feature type="domain" description="ABC transmembrane type-1" evidence="2">
    <location>
        <begin position="21"/>
        <end position="301"/>
    </location>
</feature>
<feature type="domain" description="ABC transporter" evidence="2">
    <location>
        <begin position="335"/>
        <end position="569"/>
    </location>
</feature>
<feature type="binding site" evidence="2">
    <location>
        <begin position="368"/>
        <end position="375"/>
    </location>
    <ligand>
        <name>ATP</name>
        <dbReference type="ChEBI" id="CHEBI:30616"/>
    </ligand>
</feature>
<sequence length="587" mass="64762">MTLFKVYARALRYLGAYKLRVSLVVVANIVLATITIAEPILFGRIIDAISGKGEVKPILFMWATFAVFNTIAFVLVAREADRLAHGRRATLLTEAFGRIISMPLGWHHQRGTSNALHTLLRACETLFGLWLEFMRNHLSTVIALALLIPTAMSMDLRLSAVLMVLAIAYWLIGRVVMSRTKDGQASVENHYHTVFSHVSDSISNVSVLHSYNRIEAETRALKSFADRLLEAQYPVLDWWAIASALNRMASTIAMMVVLIIGTMLVQAGQLRVGDVIAFIGFANLLIGRLDLMRQFATQIFEARSKLEEFYALEDSVREREEPAGNGEIKDVKGAIEFRDVSFGFGNSSQGLHNVSFSVKAGQTVAIVGPTGAGKTTLVNLLQRVYDAQGGKILVDGTDITKVTRKSLRRHIATVFQDAGLLNRSISDNIRLGREGASEEEMRRAAEAAAAADFIETREDRYDTHVGERGNKLSGGERQRIAIARAILKDAPILVLDEATSALDVETEARVKAAIDNLRQNRTTFIIAHRLSTVREADMVLFLDDGRVVEQGSFDELSHSNGRFAALLRASGILTDEEVRKAHTTEAA</sequence>
<organism>
    <name type="scientific">Rhizobium johnstonii (strain DSM 114642 / LMG 32736 / 3841)</name>
    <name type="common">Rhizobium leguminosarum bv. viciae</name>
    <dbReference type="NCBI Taxonomy" id="216596"/>
    <lineage>
        <taxon>Bacteria</taxon>
        <taxon>Pseudomonadati</taxon>
        <taxon>Pseudomonadota</taxon>
        <taxon>Alphaproteobacteria</taxon>
        <taxon>Hyphomicrobiales</taxon>
        <taxon>Rhizobiaceae</taxon>
        <taxon>Rhizobium/Agrobacterium group</taxon>
        <taxon>Rhizobium</taxon>
        <taxon>Rhizobium johnstonii</taxon>
    </lineage>
</organism>
<protein>
    <recommendedName>
        <fullName evidence="2">Beta-(1--&gt;2)glucan export ATP-binding/permease protein NdvA</fullName>
        <ecNumber evidence="2">7.5.2.3</ecNumber>
    </recommendedName>
</protein>
<proteinExistence type="inferred from homology"/>
<evidence type="ECO:0000250" key="1"/>
<evidence type="ECO:0000255" key="2">
    <source>
        <dbReference type="HAMAP-Rule" id="MF_01728"/>
    </source>
</evidence>
<name>NDVA_RHIJ3</name>